<protein>
    <recommendedName>
        <fullName evidence="1">Protein GrpE</fullName>
    </recommendedName>
    <alternativeName>
        <fullName evidence="1">HSP-70 cofactor</fullName>
    </alternativeName>
</protein>
<proteinExistence type="inferred from homology"/>
<organism>
    <name type="scientific">Treponema denticola (strain ATCC 35405 / DSM 14222 / CIP 103919 / JCM 8153 / KCTC 15104)</name>
    <dbReference type="NCBI Taxonomy" id="243275"/>
    <lineage>
        <taxon>Bacteria</taxon>
        <taxon>Pseudomonadati</taxon>
        <taxon>Spirochaetota</taxon>
        <taxon>Spirochaetia</taxon>
        <taxon>Spirochaetales</taxon>
        <taxon>Treponemataceae</taxon>
        <taxon>Treponema</taxon>
    </lineage>
</organism>
<keyword id="KW-0143">Chaperone</keyword>
<keyword id="KW-0963">Cytoplasm</keyword>
<keyword id="KW-1185">Reference proteome</keyword>
<keyword id="KW-0346">Stress response</keyword>
<reference key="1">
    <citation type="journal article" date="2004" name="Proc. Natl. Acad. Sci. U.S.A.">
        <title>Comparison of the genome of the oral pathogen Treponema denticola with other spirochete genomes.</title>
        <authorList>
            <person name="Seshadri R."/>
            <person name="Myers G.S.A."/>
            <person name="Tettelin H."/>
            <person name="Eisen J.A."/>
            <person name="Heidelberg J.F."/>
            <person name="Dodson R.J."/>
            <person name="Davidsen T.M."/>
            <person name="DeBoy R.T."/>
            <person name="Fouts D.E."/>
            <person name="Haft D.H."/>
            <person name="Selengut J."/>
            <person name="Ren Q."/>
            <person name="Brinkac L.M."/>
            <person name="Madupu R."/>
            <person name="Kolonay J.F."/>
            <person name="Durkin S.A."/>
            <person name="Daugherty S.C."/>
            <person name="Shetty J."/>
            <person name="Shvartsbeyn A."/>
            <person name="Gebregeorgis E."/>
            <person name="Geer K."/>
            <person name="Tsegaye G."/>
            <person name="Malek J.A."/>
            <person name="Ayodeji B."/>
            <person name="Shatsman S."/>
            <person name="McLeod M.P."/>
            <person name="Smajs D."/>
            <person name="Howell J.K."/>
            <person name="Pal S."/>
            <person name="Amin A."/>
            <person name="Vashisth P."/>
            <person name="McNeill T.Z."/>
            <person name="Xiang Q."/>
            <person name="Sodergren E."/>
            <person name="Baca E."/>
            <person name="Weinstock G.M."/>
            <person name="Norris S.J."/>
            <person name="Fraser C.M."/>
            <person name="Paulsen I.T."/>
        </authorList>
    </citation>
    <scope>NUCLEOTIDE SEQUENCE [LARGE SCALE GENOMIC DNA]</scope>
    <source>
        <strain>ATCC 35405 / DSM 14222 / CIP 103919 / JCM 8153 / KCTC 15104</strain>
    </source>
</reference>
<name>GRPE_TREDE</name>
<dbReference type="EMBL" id="AE017226">
    <property type="protein sequence ID" value="AAS11122.1"/>
    <property type="molecule type" value="Genomic_DNA"/>
</dbReference>
<dbReference type="RefSeq" id="NP_971241.1">
    <property type="nucleotide sequence ID" value="NC_002967.9"/>
</dbReference>
<dbReference type="RefSeq" id="WP_002681814.1">
    <property type="nucleotide sequence ID" value="NC_002967.9"/>
</dbReference>
<dbReference type="SMR" id="Q73Q17"/>
<dbReference type="STRING" id="243275.TDE_0627"/>
<dbReference type="PaxDb" id="243275-TDE_0627"/>
<dbReference type="GeneID" id="2739352"/>
<dbReference type="KEGG" id="tde:TDE_0627"/>
<dbReference type="PATRIC" id="fig|243275.7.peg.605"/>
<dbReference type="eggNOG" id="COG0576">
    <property type="taxonomic scope" value="Bacteria"/>
</dbReference>
<dbReference type="HOGENOM" id="CLU_057217_5_2_12"/>
<dbReference type="OrthoDB" id="9812586at2"/>
<dbReference type="Proteomes" id="UP000008212">
    <property type="component" value="Chromosome"/>
</dbReference>
<dbReference type="GO" id="GO:0005737">
    <property type="term" value="C:cytoplasm"/>
    <property type="evidence" value="ECO:0007669"/>
    <property type="project" value="UniProtKB-SubCell"/>
</dbReference>
<dbReference type="GO" id="GO:0000774">
    <property type="term" value="F:adenyl-nucleotide exchange factor activity"/>
    <property type="evidence" value="ECO:0007669"/>
    <property type="project" value="InterPro"/>
</dbReference>
<dbReference type="GO" id="GO:0042803">
    <property type="term" value="F:protein homodimerization activity"/>
    <property type="evidence" value="ECO:0007669"/>
    <property type="project" value="InterPro"/>
</dbReference>
<dbReference type="GO" id="GO:0051087">
    <property type="term" value="F:protein-folding chaperone binding"/>
    <property type="evidence" value="ECO:0007669"/>
    <property type="project" value="InterPro"/>
</dbReference>
<dbReference type="GO" id="GO:0051082">
    <property type="term" value="F:unfolded protein binding"/>
    <property type="evidence" value="ECO:0007669"/>
    <property type="project" value="TreeGrafter"/>
</dbReference>
<dbReference type="GO" id="GO:0006457">
    <property type="term" value="P:protein folding"/>
    <property type="evidence" value="ECO:0007669"/>
    <property type="project" value="InterPro"/>
</dbReference>
<dbReference type="CDD" id="cd00446">
    <property type="entry name" value="GrpE"/>
    <property type="match status" value="1"/>
</dbReference>
<dbReference type="FunFam" id="2.30.22.10:FF:000001">
    <property type="entry name" value="Protein GrpE"/>
    <property type="match status" value="1"/>
</dbReference>
<dbReference type="Gene3D" id="3.90.20.20">
    <property type="match status" value="1"/>
</dbReference>
<dbReference type="Gene3D" id="2.30.22.10">
    <property type="entry name" value="Head domain of nucleotide exchange factor GrpE"/>
    <property type="match status" value="1"/>
</dbReference>
<dbReference type="HAMAP" id="MF_01151">
    <property type="entry name" value="GrpE"/>
    <property type="match status" value="1"/>
</dbReference>
<dbReference type="InterPro" id="IPR000740">
    <property type="entry name" value="GrpE"/>
</dbReference>
<dbReference type="InterPro" id="IPR013805">
    <property type="entry name" value="GrpE_coiled_coil"/>
</dbReference>
<dbReference type="InterPro" id="IPR009012">
    <property type="entry name" value="GrpE_head"/>
</dbReference>
<dbReference type="PANTHER" id="PTHR21237">
    <property type="entry name" value="GRPE PROTEIN"/>
    <property type="match status" value="1"/>
</dbReference>
<dbReference type="PANTHER" id="PTHR21237:SF23">
    <property type="entry name" value="GRPE PROTEIN HOMOLOG, MITOCHONDRIAL"/>
    <property type="match status" value="1"/>
</dbReference>
<dbReference type="Pfam" id="PF01025">
    <property type="entry name" value="GrpE"/>
    <property type="match status" value="1"/>
</dbReference>
<dbReference type="PRINTS" id="PR00773">
    <property type="entry name" value="GRPEPROTEIN"/>
</dbReference>
<dbReference type="SUPFAM" id="SSF58014">
    <property type="entry name" value="Coiled-coil domain of nucleotide exchange factor GrpE"/>
    <property type="match status" value="1"/>
</dbReference>
<dbReference type="SUPFAM" id="SSF51064">
    <property type="entry name" value="Head domain of nucleotide exchange factor GrpE"/>
    <property type="match status" value="1"/>
</dbReference>
<dbReference type="PROSITE" id="PS01071">
    <property type="entry name" value="GRPE"/>
    <property type="match status" value="1"/>
</dbReference>
<evidence type="ECO:0000255" key="1">
    <source>
        <dbReference type="HAMAP-Rule" id="MF_01151"/>
    </source>
</evidence>
<evidence type="ECO:0000256" key="2">
    <source>
        <dbReference type="SAM" id="MobiDB-lite"/>
    </source>
</evidence>
<accession>Q73Q17</accession>
<feature type="chain" id="PRO_0000113886" description="Protein GrpE">
    <location>
        <begin position="1"/>
        <end position="247"/>
    </location>
</feature>
<feature type="region of interest" description="Disordered" evidence="2">
    <location>
        <begin position="1"/>
        <end position="68"/>
    </location>
</feature>
<feature type="region of interest" description="Disordered" evidence="2">
    <location>
        <begin position="226"/>
        <end position="247"/>
    </location>
</feature>
<feature type="compositionally biased region" description="Basic and acidic residues" evidence="2">
    <location>
        <begin position="7"/>
        <end position="35"/>
    </location>
</feature>
<feature type="compositionally biased region" description="Basic and acidic residues" evidence="2">
    <location>
        <begin position="43"/>
        <end position="54"/>
    </location>
</feature>
<feature type="compositionally biased region" description="Basic and acidic residues" evidence="2">
    <location>
        <begin position="228"/>
        <end position="247"/>
    </location>
</feature>
<comment type="function">
    <text evidence="1">Participates actively in the response to hyperosmotic and heat shock by preventing the aggregation of stress-denatured proteins, in association with DnaK and GrpE. It is the nucleotide exchange factor for DnaK and may function as a thermosensor. Unfolded proteins bind initially to DnaJ; upon interaction with the DnaJ-bound protein, DnaK hydrolyzes its bound ATP, resulting in the formation of a stable complex. GrpE releases ADP from DnaK; ATP binding to DnaK triggers the release of the substrate protein, thus completing the reaction cycle. Several rounds of ATP-dependent interactions between DnaJ, DnaK and GrpE are required for fully efficient folding.</text>
</comment>
<comment type="subunit">
    <text evidence="1">Homodimer.</text>
</comment>
<comment type="subcellular location">
    <subcellularLocation>
        <location evidence="1">Cytoplasm</location>
    </subcellularLocation>
</comment>
<comment type="similarity">
    <text evidence="1">Belongs to the GrpE family.</text>
</comment>
<gene>
    <name evidence="1" type="primary">grpE</name>
    <name type="ordered locus">TDE_0627</name>
</gene>
<sequence>MKKNHEKHADKKEAAKEELEKDLQPKDESAVKDEQGAGCGCETSKENPQEDKAEQNSSTGGKCEKNDDVLSPEKRIEELEAKCRDWQDQYLRKAADFENYRKRMIREKQEAIDYANSNLLLDLVQVLDDFDRAIDAGKTQGGESVNNAFVEGVVMIKNQMVSMLSSKYGLSYYPAKGEAFDPNLHEAVSMIQSPDVKEAVVGEELQKGYKLKERVIRHSKVMVLMPAEKQDEKKAEESEAADKKNEN</sequence>